<dbReference type="EC" id="3.5.1.5" evidence="1"/>
<dbReference type="EMBL" id="CP000687">
    <property type="protein sequence ID" value="ABY70202.1"/>
    <property type="molecule type" value="Genomic_DNA"/>
</dbReference>
<dbReference type="RefSeq" id="WP_005602348.1">
    <property type="nucleotide sequence ID" value="NC_010278.1"/>
</dbReference>
<dbReference type="SMR" id="B0BRU3"/>
<dbReference type="KEGG" id="apj:APJL_1650"/>
<dbReference type="HOGENOM" id="CLU_129707_1_1_6"/>
<dbReference type="UniPathway" id="UPA00258">
    <property type="reaction ID" value="UER00370"/>
</dbReference>
<dbReference type="Proteomes" id="UP000008547">
    <property type="component" value="Chromosome"/>
</dbReference>
<dbReference type="GO" id="GO:0035550">
    <property type="term" value="C:urease complex"/>
    <property type="evidence" value="ECO:0007669"/>
    <property type="project" value="InterPro"/>
</dbReference>
<dbReference type="GO" id="GO:0009039">
    <property type="term" value="F:urease activity"/>
    <property type="evidence" value="ECO:0007669"/>
    <property type="project" value="UniProtKB-UniRule"/>
</dbReference>
<dbReference type="GO" id="GO:0043419">
    <property type="term" value="P:urea catabolic process"/>
    <property type="evidence" value="ECO:0007669"/>
    <property type="project" value="UniProtKB-UniRule"/>
</dbReference>
<dbReference type="CDD" id="cd00407">
    <property type="entry name" value="Urease_beta"/>
    <property type="match status" value="1"/>
</dbReference>
<dbReference type="FunFam" id="2.10.150.10:FF:000001">
    <property type="entry name" value="Urease subunit beta"/>
    <property type="match status" value="1"/>
</dbReference>
<dbReference type="Gene3D" id="2.10.150.10">
    <property type="entry name" value="Urease, beta subunit"/>
    <property type="match status" value="1"/>
</dbReference>
<dbReference type="HAMAP" id="MF_01954">
    <property type="entry name" value="Urease_beta"/>
    <property type="match status" value="1"/>
</dbReference>
<dbReference type="InterPro" id="IPR002019">
    <property type="entry name" value="Urease_beta-like"/>
</dbReference>
<dbReference type="InterPro" id="IPR036461">
    <property type="entry name" value="Urease_betasu_sf"/>
</dbReference>
<dbReference type="InterPro" id="IPR050069">
    <property type="entry name" value="Urease_subunit"/>
</dbReference>
<dbReference type="NCBIfam" id="NF009682">
    <property type="entry name" value="PRK13203.1"/>
    <property type="match status" value="1"/>
</dbReference>
<dbReference type="NCBIfam" id="TIGR00192">
    <property type="entry name" value="urease_beta"/>
    <property type="match status" value="1"/>
</dbReference>
<dbReference type="PANTHER" id="PTHR33569">
    <property type="entry name" value="UREASE"/>
    <property type="match status" value="1"/>
</dbReference>
<dbReference type="PANTHER" id="PTHR33569:SF1">
    <property type="entry name" value="UREASE"/>
    <property type="match status" value="1"/>
</dbReference>
<dbReference type="Pfam" id="PF00699">
    <property type="entry name" value="Urease_beta"/>
    <property type="match status" value="1"/>
</dbReference>
<dbReference type="SUPFAM" id="SSF51278">
    <property type="entry name" value="Urease, beta-subunit"/>
    <property type="match status" value="1"/>
</dbReference>
<accession>B0BRU3</accession>
<name>URE2_ACTPJ</name>
<evidence type="ECO:0000255" key="1">
    <source>
        <dbReference type="HAMAP-Rule" id="MF_01954"/>
    </source>
</evidence>
<comment type="catalytic activity">
    <reaction evidence="1">
        <text>urea + 2 H2O + H(+) = hydrogencarbonate + 2 NH4(+)</text>
        <dbReference type="Rhea" id="RHEA:20557"/>
        <dbReference type="ChEBI" id="CHEBI:15377"/>
        <dbReference type="ChEBI" id="CHEBI:15378"/>
        <dbReference type="ChEBI" id="CHEBI:16199"/>
        <dbReference type="ChEBI" id="CHEBI:17544"/>
        <dbReference type="ChEBI" id="CHEBI:28938"/>
        <dbReference type="EC" id="3.5.1.5"/>
    </reaction>
</comment>
<comment type="pathway">
    <text evidence="1">Nitrogen metabolism; urea degradation; CO(2) and NH(3) from urea (urease route): step 1/1.</text>
</comment>
<comment type="subunit">
    <text evidence="1">Heterotrimer of UreA (gamma), UreB (beta) and UreC (alpha) subunits. Three heterotrimers associate to form the active enzyme.</text>
</comment>
<comment type="subcellular location">
    <subcellularLocation>
        <location evidence="1">Cytoplasm</location>
    </subcellularLocation>
</comment>
<comment type="similarity">
    <text evidence="1">Belongs to the urease beta subunit family.</text>
</comment>
<organism>
    <name type="scientific">Actinobacillus pleuropneumoniae serotype 3 (strain JL03)</name>
    <dbReference type="NCBI Taxonomy" id="434271"/>
    <lineage>
        <taxon>Bacteria</taxon>
        <taxon>Pseudomonadati</taxon>
        <taxon>Pseudomonadota</taxon>
        <taxon>Gammaproteobacteria</taxon>
        <taxon>Pasteurellales</taxon>
        <taxon>Pasteurellaceae</taxon>
        <taxon>Actinobacillus</taxon>
    </lineage>
</organism>
<gene>
    <name evidence="1" type="primary">ureB</name>
    <name type="ordered locus">APJL_1650</name>
</gene>
<proteinExistence type="inferred from homology"/>
<reference key="1">
    <citation type="journal article" date="2008" name="PLoS ONE">
        <title>Genome biology of Actinobacillus pleuropneumoniae JL03, an isolate of serotype 3 prevalent in China.</title>
        <authorList>
            <person name="Xu Z."/>
            <person name="Zhou Y."/>
            <person name="Li L."/>
            <person name="Zhou R."/>
            <person name="Xiao S."/>
            <person name="Wan Y."/>
            <person name="Zhang S."/>
            <person name="Wang K."/>
            <person name="Li W."/>
            <person name="Li L."/>
            <person name="Jin H."/>
            <person name="Kang M."/>
            <person name="Dalai B."/>
            <person name="Li T."/>
            <person name="Liu L."/>
            <person name="Cheng Y."/>
            <person name="Zhang L."/>
            <person name="Xu T."/>
            <person name="Zheng H."/>
            <person name="Pu S."/>
            <person name="Wang B."/>
            <person name="Gu W."/>
            <person name="Zhang X.L."/>
            <person name="Zhu G.-F."/>
            <person name="Wang S."/>
            <person name="Zhao G.-P."/>
            <person name="Chen H."/>
        </authorList>
    </citation>
    <scope>NUCLEOTIDE SEQUENCE [LARGE SCALE GENOMIC DNA]</scope>
    <source>
        <strain>JL03</strain>
    </source>
</reference>
<sequence length="101" mass="11283">MIPGEYQLADGDIQANVGRKTVKLEVVNTGDRPIQVGSHYHFFETNHALKFDRLQARGMRLNVPSGNAVRFEPGEAKEVELVEFGGNKVIYGFHNEIDGKL</sequence>
<keyword id="KW-0963">Cytoplasm</keyword>
<keyword id="KW-0378">Hydrolase</keyword>
<protein>
    <recommendedName>
        <fullName evidence="1">Urease subunit beta</fullName>
        <ecNumber evidence="1">3.5.1.5</ecNumber>
    </recommendedName>
    <alternativeName>
        <fullName evidence="1">Urea amidohydrolase subunit beta</fullName>
    </alternativeName>
</protein>
<feature type="chain" id="PRO_1000188908" description="Urease subunit beta">
    <location>
        <begin position="1"/>
        <end position="101"/>
    </location>
</feature>